<keyword id="KW-0963">Cytoplasm</keyword>
<keyword id="KW-0227">DNA damage</keyword>
<keyword id="KW-0234">DNA repair</keyword>
<keyword id="KW-0235">DNA replication</keyword>
<keyword id="KW-0238">DNA-binding</keyword>
<keyword id="KW-0239">DNA-directed DNA polymerase</keyword>
<keyword id="KW-0460">Magnesium</keyword>
<keyword id="KW-0479">Metal-binding</keyword>
<keyword id="KW-0515">Mutator protein</keyword>
<keyword id="KW-0548">Nucleotidyltransferase</keyword>
<keyword id="KW-0808">Transferase</keyword>
<evidence type="ECO:0000255" key="1">
    <source>
        <dbReference type="HAMAP-Rule" id="MF_01113"/>
    </source>
</evidence>
<sequence length="344" mass="38809">MIMLIDFDYFFAQVEEINDPSLKGKPVVVSVYSGRNERSGAVATSNYEARALGIKSGMPLYRALEIGKNRAVFLPIRKDFYQKYSDKIMDIISEYSEKMEIASIDEAYIDIDGNDCKIGIANEIKNRILNETGIKVSIGIGINKVIAKMAAEMAKPNGIKCISADETGEFLNNIKINDIPGIGKVLSKNLNEIGIEYLRDIKNFDVNKIKSILGESKTNYLYELYENKYFSPVEPRVKKNFGRYLTLPENTRDIDKIVPYLKKSIDAAYEKAPGIPQEISVVAIMEDLDIVSRSYTGNAIKRDDSINIALNLLNKIISEDNRNIRRIGVRLSKISKNNTLDDFF</sequence>
<protein>
    <recommendedName>
        <fullName evidence="1">DNA polymerase IV</fullName>
        <shortName evidence="1">Pol IV</shortName>
        <ecNumber evidence="1">2.7.7.7</ecNumber>
    </recommendedName>
</protein>
<comment type="function">
    <text evidence="1">Poorly processive, error-prone DNA polymerase involved in untargeted mutagenesis. Copies undamaged DNA at stalled replication forks, which arise in vivo from mismatched or misaligned primer ends. These misaligned primers can be extended by PolIV. Exhibits no 3'-5' exonuclease (proofreading) activity. May be involved in translesional synthesis.</text>
</comment>
<comment type="catalytic activity">
    <reaction evidence="1">
        <text>DNA(n) + a 2'-deoxyribonucleoside 5'-triphosphate = DNA(n+1) + diphosphate</text>
        <dbReference type="Rhea" id="RHEA:22508"/>
        <dbReference type="Rhea" id="RHEA-COMP:17339"/>
        <dbReference type="Rhea" id="RHEA-COMP:17340"/>
        <dbReference type="ChEBI" id="CHEBI:33019"/>
        <dbReference type="ChEBI" id="CHEBI:61560"/>
        <dbReference type="ChEBI" id="CHEBI:173112"/>
        <dbReference type="EC" id="2.7.7.7"/>
    </reaction>
</comment>
<comment type="cofactor">
    <cofactor evidence="1">
        <name>Mg(2+)</name>
        <dbReference type="ChEBI" id="CHEBI:18420"/>
    </cofactor>
    <text evidence="1">Binds 2 magnesium ions per subunit.</text>
</comment>
<comment type="subunit">
    <text evidence="1">Monomer.</text>
</comment>
<comment type="subcellular location">
    <subcellularLocation>
        <location evidence="1">Cytoplasm</location>
    </subcellularLocation>
</comment>
<comment type="similarity">
    <text evidence="1">Belongs to the DNA polymerase type-Y family.</text>
</comment>
<reference key="1">
    <citation type="journal article" date="2004" name="Proc. Natl. Acad. Sci. U.S.A.">
        <title>Genome sequence of Picrophilus torridus and its implications for life around pH 0.</title>
        <authorList>
            <person name="Fuetterer O."/>
            <person name="Angelov A."/>
            <person name="Liesegang H."/>
            <person name="Gottschalk G."/>
            <person name="Schleper C."/>
            <person name="Schepers B."/>
            <person name="Dock C."/>
            <person name="Antranikian G."/>
            <person name="Liebl W."/>
        </authorList>
    </citation>
    <scope>NUCLEOTIDE SEQUENCE [LARGE SCALE GENOMIC DNA]</scope>
    <source>
        <strain>ATCC 700027 / DSM 9790 / JCM 10055 / NBRC 100828 / KAW 2/3</strain>
    </source>
</reference>
<organism>
    <name type="scientific">Picrophilus torridus (strain ATCC 700027 / DSM 9790 / JCM 10055 / NBRC 100828 / KAW 2/3)</name>
    <dbReference type="NCBI Taxonomy" id="1122961"/>
    <lineage>
        <taxon>Archaea</taxon>
        <taxon>Methanobacteriati</taxon>
        <taxon>Thermoplasmatota</taxon>
        <taxon>Thermoplasmata</taxon>
        <taxon>Thermoplasmatales</taxon>
        <taxon>Picrophilaceae</taxon>
        <taxon>Picrophilus</taxon>
    </lineage>
</organism>
<feature type="chain" id="PRO_0000173973" description="DNA polymerase IV">
    <location>
        <begin position="1"/>
        <end position="344"/>
    </location>
</feature>
<feature type="domain" description="UmuC" evidence="1">
    <location>
        <begin position="2"/>
        <end position="183"/>
    </location>
</feature>
<feature type="active site" evidence="1">
    <location>
        <position position="106"/>
    </location>
</feature>
<feature type="binding site" evidence="1">
    <location>
        <position position="6"/>
    </location>
    <ligand>
        <name>Mg(2+)</name>
        <dbReference type="ChEBI" id="CHEBI:18420"/>
    </ligand>
</feature>
<feature type="binding site" evidence="1">
    <location>
        <position position="105"/>
    </location>
    <ligand>
        <name>Mg(2+)</name>
        <dbReference type="ChEBI" id="CHEBI:18420"/>
    </ligand>
</feature>
<feature type="site" description="Substrate discrimination" evidence="1">
    <location>
        <position position="11"/>
    </location>
</feature>
<dbReference type="EC" id="2.7.7.7" evidence="1"/>
<dbReference type="EMBL" id="AE017261">
    <property type="protein sequence ID" value="AAT43740.1"/>
    <property type="molecule type" value="Genomic_DNA"/>
</dbReference>
<dbReference type="RefSeq" id="WP_011177956.1">
    <property type="nucleotide sequence ID" value="NC_005877.1"/>
</dbReference>
<dbReference type="SMR" id="Q6KZW2"/>
<dbReference type="FunCoup" id="Q6KZW2">
    <property type="interactions" value="159"/>
</dbReference>
<dbReference type="STRING" id="263820.PTO1155"/>
<dbReference type="PaxDb" id="263820-PTO1155"/>
<dbReference type="GeneID" id="2844477"/>
<dbReference type="KEGG" id="pto:PTO1155"/>
<dbReference type="PATRIC" id="fig|263820.9.peg.1200"/>
<dbReference type="eggNOG" id="arCOG04582">
    <property type="taxonomic scope" value="Archaea"/>
</dbReference>
<dbReference type="HOGENOM" id="CLU_012348_1_2_2"/>
<dbReference type="InParanoid" id="Q6KZW2"/>
<dbReference type="OrthoDB" id="372207at2157"/>
<dbReference type="Proteomes" id="UP000000438">
    <property type="component" value="Chromosome"/>
</dbReference>
<dbReference type="GO" id="GO:0005737">
    <property type="term" value="C:cytoplasm"/>
    <property type="evidence" value="ECO:0007669"/>
    <property type="project" value="UniProtKB-SubCell"/>
</dbReference>
<dbReference type="GO" id="GO:0003684">
    <property type="term" value="F:damaged DNA binding"/>
    <property type="evidence" value="ECO:0007669"/>
    <property type="project" value="InterPro"/>
</dbReference>
<dbReference type="GO" id="GO:0003887">
    <property type="term" value="F:DNA-directed DNA polymerase activity"/>
    <property type="evidence" value="ECO:0007669"/>
    <property type="project" value="UniProtKB-UniRule"/>
</dbReference>
<dbReference type="GO" id="GO:0000287">
    <property type="term" value="F:magnesium ion binding"/>
    <property type="evidence" value="ECO:0007669"/>
    <property type="project" value="UniProtKB-UniRule"/>
</dbReference>
<dbReference type="GO" id="GO:0006261">
    <property type="term" value="P:DNA-templated DNA replication"/>
    <property type="evidence" value="ECO:0007669"/>
    <property type="project" value="UniProtKB-UniRule"/>
</dbReference>
<dbReference type="GO" id="GO:0042276">
    <property type="term" value="P:error-prone translesion synthesis"/>
    <property type="evidence" value="ECO:0007669"/>
    <property type="project" value="TreeGrafter"/>
</dbReference>
<dbReference type="CDD" id="cd03586">
    <property type="entry name" value="PolY_Pol_IV_kappa"/>
    <property type="match status" value="1"/>
</dbReference>
<dbReference type="Gene3D" id="3.30.70.270">
    <property type="match status" value="1"/>
</dbReference>
<dbReference type="Gene3D" id="3.40.1170.60">
    <property type="match status" value="1"/>
</dbReference>
<dbReference type="Gene3D" id="1.10.150.20">
    <property type="entry name" value="5' to 3' exonuclease, C-terminal subdomain"/>
    <property type="match status" value="1"/>
</dbReference>
<dbReference type="Gene3D" id="3.30.1490.100">
    <property type="entry name" value="DNA polymerase, Y-family, little finger domain"/>
    <property type="match status" value="1"/>
</dbReference>
<dbReference type="HAMAP" id="MF_01113">
    <property type="entry name" value="DNApol_IV"/>
    <property type="match status" value="1"/>
</dbReference>
<dbReference type="InterPro" id="IPR043502">
    <property type="entry name" value="DNA/RNA_pol_sf"/>
</dbReference>
<dbReference type="InterPro" id="IPR036775">
    <property type="entry name" value="DNA_pol_Y-fam_lit_finger_sf"/>
</dbReference>
<dbReference type="InterPro" id="IPR050116">
    <property type="entry name" value="DNA_polymerase-Y"/>
</dbReference>
<dbReference type="InterPro" id="IPR022880">
    <property type="entry name" value="DNApol_IV"/>
</dbReference>
<dbReference type="InterPro" id="IPR024728">
    <property type="entry name" value="PolY_HhH_motif"/>
</dbReference>
<dbReference type="InterPro" id="IPR043128">
    <property type="entry name" value="Rev_trsase/Diguanyl_cyclase"/>
</dbReference>
<dbReference type="InterPro" id="IPR001126">
    <property type="entry name" value="UmuC"/>
</dbReference>
<dbReference type="NCBIfam" id="NF002292">
    <property type="entry name" value="PRK01216.1"/>
    <property type="match status" value="1"/>
</dbReference>
<dbReference type="PANTHER" id="PTHR11076:SF33">
    <property type="entry name" value="DNA POLYMERASE KAPPA"/>
    <property type="match status" value="1"/>
</dbReference>
<dbReference type="PANTHER" id="PTHR11076">
    <property type="entry name" value="DNA REPAIR POLYMERASE UMUC / TRANSFERASE FAMILY MEMBER"/>
    <property type="match status" value="1"/>
</dbReference>
<dbReference type="Pfam" id="PF00817">
    <property type="entry name" value="IMS"/>
    <property type="match status" value="1"/>
</dbReference>
<dbReference type="Pfam" id="PF11798">
    <property type="entry name" value="IMS_HHH"/>
    <property type="match status" value="1"/>
</dbReference>
<dbReference type="SUPFAM" id="SSF56672">
    <property type="entry name" value="DNA/RNA polymerases"/>
    <property type="match status" value="1"/>
</dbReference>
<dbReference type="SUPFAM" id="SSF100879">
    <property type="entry name" value="Lesion bypass DNA polymerase (Y-family), little finger domain"/>
    <property type="match status" value="1"/>
</dbReference>
<dbReference type="PROSITE" id="PS50173">
    <property type="entry name" value="UMUC"/>
    <property type="match status" value="1"/>
</dbReference>
<gene>
    <name evidence="1" type="primary">dbh</name>
    <name type="ordered locus">PTO1155</name>
</gene>
<name>DPO4_PICTO</name>
<accession>Q6KZW2</accession>
<proteinExistence type="inferred from homology"/>